<proteinExistence type="inferred from homology"/>
<feature type="chain" id="PRO_1000059110" description="Cell division topological specificity factor">
    <location>
        <begin position="1"/>
        <end position="88"/>
    </location>
</feature>
<name>MINE_ECOHS</name>
<organism>
    <name type="scientific">Escherichia coli O9:H4 (strain HS)</name>
    <dbReference type="NCBI Taxonomy" id="331112"/>
    <lineage>
        <taxon>Bacteria</taxon>
        <taxon>Pseudomonadati</taxon>
        <taxon>Pseudomonadota</taxon>
        <taxon>Gammaproteobacteria</taxon>
        <taxon>Enterobacterales</taxon>
        <taxon>Enterobacteriaceae</taxon>
        <taxon>Escherichia</taxon>
    </lineage>
</organism>
<dbReference type="EMBL" id="CP000802">
    <property type="protein sequence ID" value="ABV05612.1"/>
    <property type="molecule type" value="Genomic_DNA"/>
</dbReference>
<dbReference type="RefSeq" id="WP_001185665.1">
    <property type="nucleotide sequence ID" value="NC_009800.1"/>
</dbReference>
<dbReference type="BMRB" id="A7ZZA8"/>
<dbReference type="SMR" id="A7ZZA8"/>
<dbReference type="GeneID" id="93776260"/>
<dbReference type="KEGG" id="ecx:EcHS_A1274"/>
<dbReference type="HOGENOM" id="CLU_137929_2_2_6"/>
<dbReference type="GO" id="GO:0051301">
    <property type="term" value="P:cell division"/>
    <property type="evidence" value="ECO:0007669"/>
    <property type="project" value="UniProtKB-KW"/>
</dbReference>
<dbReference type="GO" id="GO:0032955">
    <property type="term" value="P:regulation of division septum assembly"/>
    <property type="evidence" value="ECO:0007669"/>
    <property type="project" value="InterPro"/>
</dbReference>
<dbReference type="FunFam" id="3.30.1070.10:FF:000001">
    <property type="entry name" value="Cell division topological specificity factor"/>
    <property type="match status" value="1"/>
</dbReference>
<dbReference type="Gene3D" id="3.30.1070.10">
    <property type="entry name" value="Cell division topological specificity factor MinE"/>
    <property type="match status" value="1"/>
</dbReference>
<dbReference type="HAMAP" id="MF_00262">
    <property type="entry name" value="MinE"/>
    <property type="match status" value="1"/>
</dbReference>
<dbReference type="InterPro" id="IPR005527">
    <property type="entry name" value="MinE"/>
</dbReference>
<dbReference type="InterPro" id="IPR036707">
    <property type="entry name" value="MinE_sf"/>
</dbReference>
<dbReference type="NCBIfam" id="TIGR01215">
    <property type="entry name" value="minE"/>
    <property type="match status" value="1"/>
</dbReference>
<dbReference type="NCBIfam" id="NF001422">
    <property type="entry name" value="PRK00296.1"/>
    <property type="match status" value="1"/>
</dbReference>
<dbReference type="Pfam" id="PF03776">
    <property type="entry name" value="MinE"/>
    <property type="match status" value="1"/>
</dbReference>
<dbReference type="SUPFAM" id="SSF55229">
    <property type="entry name" value="Cell division protein MinE topological specificity domain"/>
    <property type="match status" value="1"/>
</dbReference>
<evidence type="ECO:0000255" key="1">
    <source>
        <dbReference type="HAMAP-Rule" id="MF_00262"/>
    </source>
</evidence>
<gene>
    <name evidence="1" type="primary">minE</name>
    <name type="ordered locus">EcHS_A1274</name>
</gene>
<keyword id="KW-0131">Cell cycle</keyword>
<keyword id="KW-0132">Cell division</keyword>
<accession>A7ZZA8</accession>
<protein>
    <recommendedName>
        <fullName evidence="1">Cell division topological specificity factor</fullName>
    </recommendedName>
</protein>
<reference key="1">
    <citation type="journal article" date="2008" name="J. Bacteriol.">
        <title>The pangenome structure of Escherichia coli: comparative genomic analysis of E. coli commensal and pathogenic isolates.</title>
        <authorList>
            <person name="Rasko D.A."/>
            <person name="Rosovitz M.J."/>
            <person name="Myers G.S.A."/>
            <person name="Mongodin E.F."/>
            <person name="Fricke W.F."/>
            <person name="Gajer P."/>
            <person name="Crabtree J."/>
            <person name="Sebaihia M."/>
            <person name="Thomson N.R."/>
            <person name="Chaudhuri R."/>
            <person name="Henderson I.R."/>
            <person name="Sperandio V."/>
            <person name="Ravel J."/>
        </authorList>
    </citation>
    <scope>NUCLEOTIDE SEQUENCE [LARGE SCALE GENOMIC DNA]</scope>
    <source>
        <strain>HS</strain>
    </source>
</reference>
<sequence length="88" mass="10235">MALLDFFLSRKKNTANIAKERLQIIVAERRRSDAEPHYLPQLRKDILEVICKYVQIDPEMVTVQLEQKDGDISILELNVTLPEAEELK</sequence>
<comment type="function">
    <text evidence="1">Prevents the cell division inhibition by proteins MinC and MinD at internal division sites while permitting inhibition at polar sites. This ensures cell division at the proper site by restricting the formation of a division septum at the midpoint of the long axis of the cell.</text>
</comment>
<comment type="similarity">
    <text evidence="1">Belongs to the MinE family.</text>
</comment>